<name>RL25_CELJU</name>
<feature type="chain" id="PRO_1000142500" description="Large ribosomal subunit protein bL25">
    <location>
        <begin position="1"/>
        <end position="203"/>
    </location>
</feature>
<keyword id="KW-1185">Reference proteome</keyword>
<keyword id="KW-0687">Ribonucleoprotein</keyword>
<keyword id="KW-0689">Ribosomal protein</keyword>
<keyword id="KW-0694">RNA-binding</keyword>
<keyword id="KW-0699">rRNA-binding</keyword>
<gene>
    <name evidence="1" type="primary">rplY</name>
    <name evidence="1" type="synonym">ctc</name>
    <name type="ordered locus">CJA_0643</name>
</gene>
<organism>
    <name type="scientific">Cellvibrio japonicus (strain Ueda107)</name>
    <name type="common">Pseudomonas fluorescens subsp. cellulosa</name>
    <dbReference type="NCBI Taxonomy" id="498211"/>
    <lineage>
        <taxon>Bacteria</taxon>
        <taxon>Pseudomonadati</taxon>
        <taxon>Pseudomonadota</taxon>
        <taxon>Gammaproteobacteria</taxon>
        <taxon>Cellvibrionales</taxon>
        <taxon>Cellvibrionaceae</taxon>
        <taxon>Cellvibrio</taxon>
    </lineage>
</organism>
<sequence>MSEDFKLDATARNDLGKGASRRLRRLADQVPAIIYGGSKAPVNVSVSHNELLKHLQHEAFFSHVIDLNIDGTSESVILKDVQRHPSKAQVLHLDFLRVDKNTKLHKQVPLHFINEATSVGVKTQGGKVVHNLTQLDVTCLPQDLPEFIEVDLAAIEAGQILHISDLKLPKGVISTDLTKGADHDLAVVTILKAKGGESEEAAE</sequence>
<accession>B3PJN6</accession>
<comment type="function">
    <text evidence="1">This is one of the proteins that binds to the 5S RNA in the ribosome where it forms part of the central protuberance.</text>
</comment>
<comment type="subunit">
    <text evidence="1">Part of the 50S ribosomal subunit; part of the 5S rRNA/L5/L18/L25 subcomplex. Contacts the 5S rRNA. Binds to the 5S rRNA independently of L5 and L18.</text>
</comment>
<comment type="similarity">
    <text evidence="1">Belongs to the bacterial ribosomal protein bL25 family. CTC subfamily.</text>
</comment>
<evidence type="ECO:0000255" key="1">
    <source>
        <dbReference type="HAMAP-Rule" id="MF_01334"/>
    </source>
</evidence>
<evidence type="ECO:0000305" key="2"/>
<dbReference type="EMBL" id="CP000934">
    <property type="protein sequence ID" value="ACE83686.1"/>
    <property type="molecule type" value="Genomic_DNA"/>
</dbReference>
<dbReference type="RefSeq" id="WP_012486320.1">
    <property type="nucleotide sequence ID" value="NC_010995.1"/>
</dbReference>
<dbReference type="SMR" id="B3PJN6"/>
<dbReference type="STRING" id="498211.CJA_0643"/>
<dbReference type="KEGG" id="cja:CJA_0643"/>
<dbReference type="eggNOG" id="COG1825">
    <property type="taxonomic scope" value="Bacteria"/>
</dbReference>
<dbReference type="HOGENOM" id="CLU_075939_0_1_6"/>
<dbReference type="OrthoDB" id="9806411at2"/>
<dbReference type="Proteomes" id="UP000001036">
    <property type="component" value="Chromosome"/>
</dbReference>
<dbReference type="GO" id="GO:0022625">
    <property type="term" value="C:cytosolic large ribosomal subunit"/>
    <property type="evidence" value="ECO:0007669"/>
    <property type="project" value="TreeGrafter"/>
</dbReference>
<dbReference type="GO" id="GO:0008097">
    <property type="term" value="F:5S rRNA binding"/>
    <property type="evidence" value="ECO:0007669"/>
    <property type="project" value="InterPro"/>
</dbReference>
<dbReference type="GO" id="GO:0003735">
    <property type="term" value="F:structural constituent of ribosome"/>
    <property type="evidence" value="ECO:0007669"/>
    <property type="project" value="InterPro"/>
</dbReference>
<dbReference type="GO" id="GO:0006412">
    <property type="term" value="P:translation"/>
    <property type="evidence" value="ECO:0007669"/>
    <property type="project" value="UniProtKB-UniRule"/>
</dbReference>
<dbReference type="CDD" id="cd00495">
    <property type="entry name" value="Ribosomal_L25_TL5_CTC"/>
    <property type="match status" value="1"/>
</dbReference>
<dbReference type="Gene3D" id="2.170.120.20">
    <property type="entry name" value="Ribosomal protein L25, beta domain"/>
    <property type="match status" value="1"/>
</dbReference>
<dbReference type="Gene3D" id="2.40.240.10">
    <property type="entry name" value="Ribosomal Protein L25, Chain P"/>
    <property type="match status" value="1"/>
</dbReference>
<dbReference type="HAMAP" id="MF_01336">
    <property type="entry name" value="Ribosomal_bL25"/>
    <property type="match status" value="1"/>
</dbReference>
<dbReference type="HAMAP" id="MF_01334">
    <property type="entry name" value="Ribosomal_bL25_CTC"/>
    <property type="match status" value="1"/>
</dbReference>
<dbReference type="InterPro" id="IPR020056">
    <property type="entry name" value="Rbsml_bL25/Gln-tRNA_synth_N"/>
</dbReference>
<dbReference type="InterPro" id="IPR011035">
    <property type="entry name" value="Ribosomal_bL25/Gln-tRNA_synth"/>
</dbReference>
<dbReference type="InterPro" id="IPR020057">
    <property type="entry name" value="Ribosomal_bL25_b-dom"/>
</dbReference>
<dbReference type="InterPro" id="IPR037121">
    <property type="entry name" value="Ribosomal_bL25_C"/>
</dbReference>
<dbReference type="InterPro" id="IPR001021">
    <property type="entry name" value="Ribosomal_bL25_long"/>
</dbReference>
<dbReference type="InterPro" id="IPR020055">
    <property type="entry name" value="Ribosomal_bL25_short"/>
</dbReference>
<dbReference type="InterPro" id="IPR029751">
    <property type="entry name" value="Ribosomal_L25_dom"/>
</dbReference>
<dbReference type="InterPro" id="IPR020930">
    <property type="entry name" value="Ribosomal_uL5_bac-type"/>
</dbReference>
<dbReference type="NCBIfam" id="TIGR00731">
    <property type="entry name" value="bL25_bact_ctc"/>
    <property type="match status" value="1"/>
</dbReference>
<dbReference type="NCBIfam" id="NF004128">
    <property type="entry name" value="PRK05618.1-2"/>
    <property type="match status" value="1"/>
</dbReference>
<dbReference type="NCBIfam" id="NF004130">
    <property type="entry name" value="PRK05618.1-5"/>
    <property type="match status" value="1"/>
</dbReference>
<dbReference type="NCBIfam" id="NF004612">
    <property type="entry name" value="PRK05943.1"/>
    <property type="match status" value="1"/>
</dbReference>
<dbReference type="PANTHER" id="PTHR33284">
    <property type="entry name" value="RIBOSOMAL PROTEIN L25/GLN-TRNA SYNTHETASE, ANTI-CODON-BINDING DOMAIN-CONTAINING PROTEIN"/>
    <property type="match status" value="1"/>
</dbReference>
<dbReference type="PANTHER" id="PTHR33284:SF1">
    <property type="entry name" value="RIBOSOMAL PROTEIN L25_GLN-TRNA SYNTHETASE, ANTI-CODON-BINDING DOMAIN-CONTAINING PROTEIN"/>
    <property type="match status" value="1"/>
</dbReference>
<dbReference type="Pfam" id="PF01386">
    <property type="entry name" value="Ribosomal_L25p"/>
    <property type="match status" value="1"/>
</dbReference>
<dbReference type="Pfam" id="PF14693">
    <property type="entry name" value="Ribosomal_TL5_C"/>
    <property type="match status" value="1"/>
</dbReference>
<dbReference type="SUPFAM" id="SSF50715">
    <property type="entry name" value="Ribosomal protein L25-like"/>
    <property type="match status" value="1"/>
</dbReference>
<protein>
    <recommendedName>
        <fullName evidence="1">Large ribosomal subunit protein bL25</fullName>
    </recommendedName>
    <alternativeName>
        <fullName evidence="2">50S ribosomal protein L25</fullName>
    </alternativeName>
    <alternativeName>
        <fullName evidence="1">General stress protein CTC</fullName>
    </alternativeName>
</protein>
<proteinExistence type="inferred from homology"/>
<reference key="1">
    <citation type="journal article" date="2008" name="J. Bacteriol.">
        <title>Insights into plant cell wall degradation from the genome sequence of the soil bacterium Cellvibrio japonicus.</title>
        <authorList>
            <person name="DeBoy R.T."/>
            <person name="Mongodin E.F."/>
            <person name="Fouts D.E."/>
            <person name="Tailford L.E."/>
            <person name="Khouri H."/>
            <person name="Emerson J.B."/>
            <person name="Mohamoud Y."/>
            <person name="Watkins K."/>
            <person name="Henrissat B."/>
            <person name="Gilbert H.J."/>
            <person name="Nelson K.E."/>
        </authorList>
    </citation>
    <scope>NUCLEOTIDE SEQUENCE [LARGE SCALE GENOMIC DNA]</scope>
    <source>
        <strain>Ueda107</strain>
    </source>
</reference>